<keyword id="KW-0460">Magnesium</keyword>
<keyword id="KW-0479">Metal-binding</keyword>
<keyword id="KW-0520">NAD</keyword>
<keyword id="KW-0560">Oxidoreductase</keyword>
<keyword id="KW-0597">Phosphoprotein</keyword>
<keyword id="KW-1185">Reference proteome</keyword>
<sequence>MMKVCVIEGDGIGKEVIPEAIKILNELGEFEIIKGEAGLECLKKYGNALPEDTIEKAKEADIILFGAITSPKPGEVKNYKSPIITLRKMFHLYANVRPINNFGIGQLIGKIADYEFLNAKNIDIVIIRENTEDLYVGRERLENDTAIAERVITRKGSERIIRFAFEYAIKNNRKKVSCIHKANVLRITDGLFLEVFNEIKKHYNIEADDYLVDSTAMNLIKHPEKFDVIVTTNMFGDILSDEASALIGGLGLAPSANIGDDKALFEPVHGSAPDIAGKGIANPMASILSIAMLFDYIGEKEKGDLIREAVKYCLINKKVTPDLGGDLKTKDVGDEILNYIRKKLKGY</sequence>
<proteinExistence type="evidence at protein level"/>
<evidence type="ECO:0000250" key="1"/>
<evidence type="ECO:0000250" key="2">
    <source>
        <dbReference type="UniProtKB" id="Q72IW9"/>
    </source>
</evidence>
<evidence type="ECO:0000269" key="3">
    <source>
    </source>
</evidence>
<evidence type="ECO:0000269" key="4">
    <source>
    </source>
</evidence>
<evidence type="ECO:0000305" key="5"/>
<evidence type="ECO:0000305" key="6">
    <source>
    </source>
</evidence>
<dbReference type="EC" id="1.1.1.87" evidence="3 4"/>
<dbReference type="EC" id="1.1.1.-" evidence="3 4"/>
<dbReference type="EMBL" id="EU447775">
    <property type="protein sequence ID" value="ACA28837.1"/>
    <property type="molecule type" value="Genomic_DNA"/>
</dbReference>
<dbReference type="EMBL" id="L77117">
    <property type="protein sequence ID" value="AAB99614.1"/>
    <property type="molecule type" value="Genomic_DNA"/>
</dbReference>
<dbReference type="SMR" id="Q58991"/>
<dbReference type="FunCoup" id="Q58991">
    <property type="interactions" value="271"/>
</dbReference>
<dbReference type="STRING" id="243232.MJ_1596"/>
<dbReference type="PaxDb" id="243232-MJ_1596"/>
<dbReference type="EnsemblBacteria" id="AAB99614">
    <property type="protein sequence ID" value="AAB99614"/>
    <property type="gene ID" value="MJ_1596"/>
</dbReference>
<dbReference type="KEGG" id="mja:MJ_1596"/>
<dbReference type="eggNOG" id="arCOG01163">
    <property type="taxonomic scope" value="Archaea"/>
</dbReference>
<dbReference type="HOGENOM" id="CLU_031953_0_1_2"/>
<dbReference type="InParanoid" id="Q58991"/>
<dbReference type="PhylomeDB" id="Q58991"/>
<dbReference type="BioCyc" id="MetaCyc:MONOMER-2004"/>
<dbReference type="BRENDA" id="4.2.1.114">
    <property type="organism ID" value="3260"/>
</dbReference>
<dbReference type="UniPathway" id="UPA00919"/>
<dbReference type="Proteomes" id="UP000000805">
    <property type="component" value="Chromosome"/>
</dbReference>
<dbReference type="GO" id="GO:0003862">
    <property type="term" value="F:3-isopropylmalate dehydrogenase activity"/>
    <property type="evidence" value="ECO:0007669"/>
    <property type="project" value="InterPro"/>
</dbReference>
<dbReference type="GO" id="GO:0047046">
    <property type="term" value="F:homoisocitrate dehydrogenase activity"/>
    <property type="evidence" value="ECO:0007669"/>
    <property type="project" value="UniProtKB-EC"/>
</dbReference>
<dbReference type="GO" id="GO:0004449">
    <property type="term" value="F:isocitrate dehydrogenase (NAD+) activity"/>
    <property type="evidence" value="ECO:0000318"/>
    <property type="project" value="GO_Central"/>
</dbReference>
<dbReference type="GO" id="GO:0000287">
    <property type="term" value="F:magnesium ion binding"/>
    <property type="evidence" value="ECO:0007669"/>
    <property type="project" value="InterPro"/>
</dbReference>
<dbReference type="GO" id="GO:0051287">
    <property type="term" value="F:NAD binding"/>
    <property type="evidence" value="ECO:0007669"/>
    <property type="project" value="InterPro"/>
</dbReference>
<dbReference type="GO" id="GO:0019298">
    <property type="term" value="P:coenzyme B biosynthetic process"/>
    <property type="evidence" value="ECO:0000314"/>
    <property type="project" value="MENGO"/>
</dbReference>
<dbReference type="GO" id="GO:0006102">
    <property type="term" value="P:isocitrate metabolic process"/>
    <property type="evidence" value="ECO:0000318"/>
    <property type="project" value="GO_Central"/>
</dbReference>
<dbReference type="GO" id="GO:0009098">
    <property type="term" value="P:L-leucine biosynthetic process"/>
    <property type="evidence" value="ECO:0007669"/>
    <property type="project" value="InterPro"/>
</dbReference>
<dbReference type="FunFam" id="3.40.718.10:FF:000019">
    <property type="entry name" value="Homoisocitrate dehydrogenase"/>
    <property type="match status" value="1"/>
</dbReference>
<dbReference type="Gene3D" id="3.40.718.10">
    <property type="entry name" value="Isopropylmalate Dehydrogenase"/>
    <property type="match status" value="1"/>
</dbReference>
<dbReference type="InterPro" id="IPR054960">
    <property type="entry name" value="HICDH"/>
</dbReference>
<dbReference type="InterPro" id="IPR019818">
    <property type="entry name" value="IsoCit/isopropylmalate_DH_CS"/>
</dbReference>
<dbReference type="InterPro" id="IPR024084">
    <property type="entry name" value="IsoPropMal-DH-like_dom"/>
</dbReference>
<dbReference type="InterPro" id="IPR011828">
    <property type="entry name" value="LEU3_arc"/>
</dbReference>
<dbReference type="NCBIfam" id="NF040619">
    <property type="entry name" value="AksF_Meth"/>
    <property type="match status" value="1"/>
</dbReference>
<dbReference type="NCBIfam" id="TIGR02088">
    <property type="entry name" value="LEU3_arch"/>
    <property type="match status" value="1"/>
</dbReference>
<dbReference type="PANTHER" id="PTHR11835">
    <property type="entry name" value="DECARBOXYLATING DEHYDROGENASES-ISOCITRATE, ISOPROPYLMALATE, TARTRATE"/>
    <property type="match status" value="1"/>
</dbReference>
<dbReference type="PANTHER" id="PTHR11835:SF34">
    <property type="entry name" value="ISOCITRATE DEHYDROGENASE [NAD] SUBUNIT ALPHA, MITOCHONDRIAL"/>
    <property type="match status" value="1"/>
</dbReference>
<dbReference type="Pfam" id="PF00180">
    <property type="entry name" value="Iso_dh"/>
    <property type="match status" value="1"/>
</dbReference>
<dbReference type="SMART" id="SM01329">
    <property type="entry name" value="Iso_dh"/>
    <property type="match status" value="1"/>
</dbReference>
<dbReference type="SUPFAM" id="SSF53659">
    <property type="entry name" value="Isocitrate/Isopropylmalate dehydrogenase-like"/>
    <property type="match status" value="1"/>
</dbReference>
<dbReference type="PROSITE" id="PS00470">
    <property type="entry name" value="IDH_IMDH"/>
    <property type="match status" value="1"/>
</dbReference>
<reference key="1">
    <citation type="journal article" date="2008" name="J. Biol. Chem.">
        <title>Methanogen homoaconitase catalyzes both hydrolyase reactions in coenzyme B biosynthesis.</title>
        <authorList>
            <person name="Drevland R.M."/>
            <person name="Jia Y."/>
            <person name="Palmer D.R.J."/>
            <person name="Graham D.E."/>
        </authorList>
    </citation>
    <scope>NUCLEOTIDE SEQUENCE [GENOMIC DNA]</scope>
    <scope>FUNCTION</scope>
    <scope>CATALYTIC ACTIVITY</scope>
    <scope>SUBSTRATE SPECIFICITY</scope>
    <source>
        <strain>ATCC 43067 / DSM 2661 / JAL-1 / JCM 10045 / NBRC 100440</strain>
    </source>
</reference>
<reference key="2">
    <citation type="journal article" date="1996" name="Science">
        <title>Complete genome sequence of the methanogenic archaeon, Methanococcus jannaschii.</title>
        <authorList>
            <person name="Bult C.J."/>
            <person name="White O."/>
            <person name="Olsen G.J."/>
            <person name="Zhou L."/>
            <person name="Fleischmann R.D."/>
            <person name="Sutton G.G."/>
            <person name="Blake J.A."/>
            <person name="FitzGerald L.M."/>
            <person name="Clayton R.A."/>
            <person name="Gocayne J.D."/>
            <person name="Kerlavage A.R."/>
            <person name="Dougherty B.A."/>
            <person name="Tomb J.-F."/>
            <person name="Adams M.D."/>
            <person name="Reich C.I."/>
            <person name="Overbeek R."/>
            <person name="Kirkness E.F."/>
            <person name="Weinstock K.G."/>
            <person name="Merrick J.M."/>
            <person name="Glodek A."/>
            <person name="Scott J.L."/>
            <person name="Geoghagen N.S.M."/>
            <person name="Weidman J.F."/>
            <person name="Fuhrmann J.L."/>
            <person name="Nguyen D."/>
            <person name="Utterback T.R."/>
            <person name="Kelley J.M."/>
            <person name="Peterson J.D."/>
            <person name="Sadow P.W."/>
            <person name="Hanna M.C."/>
            <person name="Cotton M.D."/>
            <person name="Roberts K.M."/>
            <person name="Hurst M.A."/>
            <person name="Kaine B.P."/>
            <person name="Borodovsky M."/>
            <person name="Klenk H.-P."/>
            <person name="Fraser C.M."/>
            <person name="Smith H.O."/>
            <person name="Woese C.R."/>
            <person name="Venter J.C."/>
        </authorList>
    </citation>
    <scope>NUCLEOTIDE SEQUENCE [LARGE SCALE GENOMIC DNA]</scope>
    <source>
        <strain>ATCC 43067 / DSM 2661 / JAL-1 / JCM 10045 / NBRC 100440</strain>
    </source>
</reference>
<reference key="3">
    <citation type="journal article" date="2000" name="J. Bacteriol.">
        <title>Identification of enzymes homologous to isocitrate dehydrogenase that are involved in coenzyme B and leucine biosynthesis in methanoarchaea.</title>
        <authorList>
            <person name="Howell D.M."/>
            <person name="Graupner M."/>
            <person name="Xu H."/>
            <person name="White R.H."/>
        </authorList>
    </citation>
    <scope>FUNCTION</scope>
    <scope>CATALYTIC ACTIVITY</scope>
    <scope>SUBSTRATE SPECIFICITY</scope>
    <scope>BIOPHYSICOCHEMICAL PROPERTIES</scope>
    <scope>PATHWAY</scope>
</reference>
<name>AKSF_METJA</name>
<comment type="function">
    <text evidence="3 4">Catalyzes the NAD-dependent oxidation and decarboxylation of (2R,3S)-homoisocitrate, (2R,3S)-homo(2)-isocitrate and (2R,3S)-homo(3)-isocitrate, into 2-oxoadipate, 2-oxopimelate (2-oxoheptanedioate), and 2-oxosuberate, respectively. All these substrates are intermediates in the biosynthesis of biotin and of 7-mercaptoheptanoate, a moiety of coenzyme B in methanoarchaea (PubMed:10940051, PubMed:18765671). Is also able to produce 2-oxoazelate from (2R,3S)-homo(4)-isocitrate in vitro, but this substrate is probably not physiologically relevant (PubMed:18765671). Is unable to use any isomer of isocitrate or isopropylmalate as a substrate, and NADP as an oxidant (PubMed:10940051).</text>
</comment>
<comment type="catalytic activity">
    <reaction evidence="3 4">
        <text>(2R,3S)-homoisocitrate + NAD(+) = 2-oxoadipate + CO2 + NADH</text>
        <dbReference type="Rhea" id="RHEA:11900"/>
        <dbReference type="ChEBI" id="CHEBI:15404"/>
        <dbReference type="ChEBI" id="CHEBI:16526"/>
        <dbReference type="ChEBI" id="CHEBI:57499"/>
        <dbReference type="ChEBI" id="CHEBI:57540"/>
        <dbReference type="ChEBI" id="CHEBI:57945"/>
        <dbReference type="EC" id="1.1.1.87"/>
    </reaction>
    <physiologicalReaction direction="left-to-right" evidence="6">
        <dbReference type="Rhea" id="RHEA:11901"/>
    </physiologicalReaction>
</comment>
<comment type="catalytic activity">
    <reaction evidence="3 4">
        <text>(2R,3S)-iso(homo)2citrate + NAD(+) = 2-oxoheptanedioate + CO2 + NADH</text>
        <dbReference type="Rhea" id="RHEA:68404"/>
        <dbReference type="ChEBI" id="CHEBI:16526"/>
        <dbReference type="ChEBI" id="CHEBI:57540"/>
        <dbReference type="ChEBI" id="CHEBI:57945"/>
        <dbReference type="ChEBI" id="CHEBI:72701"/>
        <dbReference type="ChEBI" id="CHEBI:72722"/>
    </reaction>
    <physiologicalReaction direction="left-to-right" evidence="6">
        <dbReference type="Rhea" id="RHEA:68405"/>
    </physiologicalReaction>
</comment>
<comment type="catalytic activity">
    <reaction evidence="3 4">
        <text>(2R,3S)-iso(homo)3citrate + NAD(+) = 2-oxosuberate + CO2 + NADH</text>
        <dbReference type="Rhea" id="RHEA:68408"/>
        <dbReference type="ChEBI" id="CHEBI:16526"/>
        <dbReference type="ChEBI" id="CHEBI:57540"/>
        <dbReference type="ChEBI" id="CHEBI:57945"/>
        <dbReference type="ChEBI" id="CHEBI:177881"/>
        <dbReference type="ChEBI" id="CHEBI:177882"/>
    </reaction>
    <physiologicalReaction direction="left-to-right" evidence="6">
        <dbReference type="Rhea" id="RHEA:68409"/>
    </physiologicalReaction>
</comment>
<comment type="cofactor">
    <cofactor evidence="6">
        <name>Mg(2+)</name>
        <dbReference type="ChEBI" id="CHEBI:18420"/>
    </cofactor>
    <text evidence="2">Binds 1 Mg(2+) ion per subunit.</text>
</comment>
<comment type="biophysicochemical properties">
    <kinetics>
        <KM evidence="3">0.037 mM for (2R,3S)-homoisocitrate</KM>
        <KM evidence="3">0.016 mM for (2R,3S)-homo(2)-isocitrate</KM>
        <KM evidence="3">0.021 mM for (2R,3S)-homo(3)-isocitrate</KM>
        <Vmax evidence="3">2.6 umol/min/mg enzyme with (2R,3S)-homoisocitrate as substrate</Vmax>
        <Vmax evidence="3">8.7 umol/min/mg enzyme with (2R,3S)-homo(2)-isocitrate as substrate</Vmax>
        <Vmax evidence="3">7.1 umol/min/mg enzyme with (2R,3S)-homo(3)-isocitrate as substrate</Vmax>
    </kinetics>
    <temperatureDependence>
        <text evidence="3">Stable at 100 degrees Celsius for 10 min.</text>
    </temperatureDependence>
</comment>
<comment type="pathway">
    <text evidence="3">Organic acid metabolism; 2-oxosuberate biosynthesis.</text>
</comment>
<comment type="similarity">
    <text evidence="5">Belongs to the isocitrate and isopropylmalate dehydrogenases family.</text>
</comment>
<gene>
    <name type="primary">aksF</name>
    <name type="synonym">icd</name>
    <name type="ordered locus">MJ1596</name>
</gene>
<feature type="chain" id="PRO_0000083574" description="Homoisocitrate dehydrogenase">
    <location>
        <begin position="1"/>
        <end position="347"/>
    </location>
</feature>
<feature type="binding site" evidence="2">
    <location>
        <begin position="68"/>
        <end position="70"/>
    </location>
    <ligand>
        <name>NADH</name>
        <dbReference type="ChEBI" id="CHEBI:57945"/>
    </ligand>
</feature>
<feature type="binding site" description="in other chain" evidence="2">
    <location>
        <position position="70"/>
    </location>
    <ligand>
        <name>(2R,3S)-homoisocitrate</name>
        <dbReference type="ChEBI" id="CHEBI:15404"/>
        <note>ligand shared between homodimeric partners</note>
    </ligand>
</feature>
<feature type="binding site" description="in other chain" evidence="2">
    <location>
        <position position="87"/>
    </location>
    <ligand>
        <name>(2R,3S)-homoisocitrate</name>
        <dbReference type="ChEBI" id="CHEBI:15404"/>
        <note>ligand shared between homodimeric partners</note>
    </ligand>
</feature>
<feature type="binding site" description="in other chain" evidence="2">
    <location>
        <position position="97"/>
    </location>
    <ligand>
        <name>(2R,3S)-homoisocitrate</name>
        <dbReference type="ChEBI" id="CHEBI:15404"/>
        <note>ligand shared between homodimeric partners</note>
    </ligand>
</feature>
<feature type="binding site" description="in other chain" evidence="2">
    <location>
        <position position="128"/>
    </location>
    <ligand>
        <name>(2R,3S)-homoisocitrate</name>
        <dbReference type="ChEBI" id="CHEBI:15404"/>
        <note>ligand shared between homodimeric partners</note>
    </ligand>
</feature>
<feature type="binding site" description="in other chain" evidence="2">
    <location>
        <position position="135"/>
    </location>
    <ligand>
        <name>(2R,3S)-homoisocitrate</name>
        <dbReference type="ChEBI" id="CHEBI:15404"/>
        <note>ligand shared between homodimeric partners</note>
    </ligand>
</feature>
<feature type="binding site" evidence="2">
    <location>
        <position position="181"/>
    </location>
    <ligand>
        <name>(2R,3S)-homoisocitrate</name>
        <dbReference type="ChEBI" id="CHEBI:15404"/>
        <note>ligand shared between homodimeric partners</note>
    </ligand>
</feature>
<feature type="binding site" evidence="2">
    <location>
        <position position="183"/>
    </location>
    <ligand>
        <name>(2R,3S)-homoisocitrate</name>
        <dbReference type="ChEBI" id="CHEBI:15404"/>
        <note>ligand shared between homodimeric partners</note>
    </ligand>
</feature>
<feature type="binding site" evidence="2">
    <location>
        <position position="183"/>
    </location>
    <ligand>
        <name>NADH</name>
        <dbReference type="ChEBI" id="CHEBI:57945"/>
    </ligand>
</feature>
<feature type="binding site" evidence="2">
    <location>
        <position position="213"/>
    </location>
    <ligand>
        <name>Mg(2+)</name>
        <dbReference type="ChEBI" id="CHEBI:18420"/>
    </ligand>
</feature>
<feature type="binding site" evidence="2">
    <location>
        <position position="237"/>
    </location>
    <ligand>
        <name>Mg(2+)</name>
        <dbReference type="ChEBI" id="CHEBI:18420"/>
    </ligand>
</feature>
<feature type="binding site" evidence="2">
    <location>
        <position position="241"/>
    </location>
    <ligand>
        <name>Mg(2+)</name>
        <dbReference type="ChEBI" id="CHEBI:18420"/>
    </ligand>
</feature>
<feature type="binding site" evidence="2">
    <location>
        <begin position="270"/>
        <end position="274"/>
    </location>
    <ligand>
        <name>NADH</name>
        <dbReference type="ChEBI" id="CHEBI:57945"/>
    </ligand>
</feature>
<feature type="binding site" evidence="2">
    <location>
        <position position="282"/>
    </location>
    <ligand>
        <name>NADH</name>
        <dbReference type="ChEBI" id="CHEBI:57945"/>
    </ligand>
</feature>
<feature type="modified residue" description="Phosphoserine" evidence="1">
    <location>
        <position position="81"/>
    </location>
</feature>
<feature type="sequence conflict" description="In Ref. 2; AAB99614." evidence="5" ref="2">
    <original>K</original>
    <variation>Q</variation>
    <location>
        <position position="77"/>
    </location>
</feature>
<protein>
    <recommendedName>
        <fullName>Homoisocitrate dehydrogenase</fullName>
        <shortName>HICDH</shortName>
        <ecNumber evidence="3 4">1.1.1.87</ecNumber>
    </recommendedName>
    <alternativeName>
        <fullName>Homo(2)-isocitrate/homo(3)-isocitrate dehydrogenase</fullName>
        <ecNumber evidence="3 4">1.1.1.-</ecNumber>
    </alternativeName>
    <alternativeName>
        <fullName>Isohomocitrate dehydrogenase</fullName>
        <shortName>IHDH</shortName>
    </alternativeName>
    <alternativeName>
        <fullName>NAD-dependent threo-isohomocitrate dehydrogenase</fullName>
    </alternativeName>
</protein>
<organism>
    <name type="scientific">Methanocaldococcus jannaschii (strain ATCC 43067 / DSM 2661 / JAL-1 / JCM 10045 / NBRC 100440)</name>
    <name type="common">Methanococcus jannaschii</name>
    <dbReference type="NCBI Taxonomy" id="243232"/>
    <lineage>
        <taxon>Archaea</taxon>
        <taxon>Methanobacteriati</taxon>
        <taxon>Methanobacteriota</taxon>
        <taxon>Methanomada group</taxon>
        <taxon>Methanococci</taxon>
        <taxon>Methanococcales</taxon>
        <taxon>Methanocaldococcaceae</taxon>
        <taxon>Methanocaldococcus</taxon>
    </lineage>
</organism>
<accession>Q58991</accession>
<accession>B1PL93</accession>